<name>PSRP_ECO55</name>
<feature type="chain" id="PRO_1000149708" description="Phosphoenolpyruvate synthase regulatory protein">
    <location>
        <begin position="1"/>
        <end position="277"/>
    </location>
</feature>
<feature type="binding site" evidence="1">
    <location>
        <begin position="157"/>
        <end position="164"/>
    </location>
    <ligand>
        <name>ADP</name>
        <dbReference type="ChEBI" id="CHEBI:456216"/>
    </ligand>
</feature>
<evidence type="ECO:0000255" key="1">
    <source>
        <dbReference type="HAMAP-Rule" id="MF_01062"/>
    </source>
</evidence>
<protein>
    <recommendedName>
        <fullName evidence="1">Phosphoenolpyruvate synthase regulatory protein</fullName>
        <shortName evidence="1">PEP synthase regulatory protein</shortName>
        <shortName evidence="1">PSRP</shortName>
        <ecNumber evidence="1">2.7.11.33</ecNumber>
        <ecNumber evidence="1">2.7.4.28</ecNumber>
    </recommendedName>
    <alternativeName>
        <fullName evidence="1">Pyruvate, water dikinase regulatory protein</fullName>
    </alternativeName>
</protein>
<comment type="function">
    <text evidence="1">Bifunctional serine/threonine kinase and phosphorylase involved in the regulation of the phosphoenolpyruvate synthase (PEPS) by catalyzing its phosphorylation/dephosphorylation.</text>
</comment>
<comment type="catalytic activity">
    <reaction evidence="1">
        <text>[pyruvate, water dikinase] + ADP = [pyruvate, water dikinase]-phosphate + AMP + H(+)</text>
        <dbReference type="Rhea" id="RHEA:46020"/>
        <dbReference type="Rhea" id="RHEA-COMP:11425"/>
        <dbReference type="Rhea" id="RHEA-COMP:11426"/>
        <dbReference type="ChEBI" id="CHEBI:15378"/>
        <dbReference type="ChEBI" id="CHEBI:43176"/>
        <dbReference type="ChEBI" id="CHEBI:68546"/>
        <dbReference type="ChEBI" id="CHEBI:456215"/>
        <dbReference type="ChEBI" id="CHEBI:456216"/>
        <dbReference type="EC" id="2.7.11.33"/>
    </reaction>
</comment>
<comment type="catalytic activity">
    <reaction evidence="1">
        <text>[pyruvate, water dikinase]-phosphate + phosphate + H(+) = [pyruvate, water dikinase] + diphosphate</text>
        <dbReference type="Rhea" id="RHEA:48580"/>
        <dbReference type="Rhea" id="RHEA-COMP:11425"/>
        <dbReference type="Rhea" id="RHEA-COMP:11426"/>
        <dbReference type="ChEBI" id="CHEBI:15378"/>
        <dbReference type="ChEBI" id="CHEBI:33019"/>
        <dbReference type="ChEBI" id="CHEBI:43176"/>
        <dbReference type="ChEBI" id="CHEBI:43474"/>
        <dbReference type="ChEBI" id="CHEBI:68546"/>
        <dbReference type="EC" id="2.7.4.28"/>
    </reaction>
</comment>
<comment type="similarity">
    <text evidence="1">Belongs to the pyruvate, phosphate/water dikinase regulatory protein family. PSRP subfamily.</text>
</comment>
<keyword id="KW-0418">Kinase</keyword>
<keyword id="KW-0547">Nucleotide-binding</keyword>
<keyword id="KW-1185">Reference proteome</keyword>
<keyword id="KW-0723">Serine/threonine-protein kinase</keyword>
<keyword id="KW-0808">Transferase</keyword>
<dbReference type="EC" id="2.7.11.33" evidence="1"/>
<dbReference type="EC" id="2.7.4.28" evidence="1"/>
<dbReference type="EMBL" id="CU928145">
    <property type="protein sequence ID" value="CAU97729.1"/>
    <property type="molecule type" value="Genomic_DNA"/>
</dbReference>
<dbReference type="RefSeq" id="WP_000368046.1">
    <property type="nucleotide sequence ID" value="NZ_CP028304.1"/>
</dbReference>
<dbReference type="SMR" id="B7L6H6"/>
<dbReference type="GeneID" id="93775866"/>
<dbReference type="KEGG" id="eck:EC55989_1871"/>
<dbReference type="HOGENOM" id="CLU_046206_1_0_6"/>
<dbReference type="Proteomes" id="UP000000746">
    <property type="component" value="Chromosome"/>
</dbReference>
<dbReference type="GO" id="GO:0043531">
    <property type="term" value="F:ADP binding"/>
    <property type="evidence" value="ECO:0007669"/>
    <property type="project" value="UniProtKB-UniRule"/>
</dbReference>
<dbReference type="GO" id="GO:0005524">
    <property type="term" value="F:ATP binding"/>
    <property type="evidence" value="ECO:0007669"/>
    <property type="project" value="InterPro"/>
</dbReference>
<dbReference type="GO" id="GO:0016776">
    <property type="term" value="F:phosphotransferase activity, phosphate group as acceptor"/>
    <property type="evidence" value="ECO:0007669"/>
    <property type="project" value="UniProtKB-UniRule"/>
</dbReference>
<dbReference type="GO" id="GO:0004674">
    <property type="term" value="F:protein serine/threonine kinase activity"/>
    <property type="evidence" value="ECO:0007669"/>
    <property type="project" value="UniProtKB-UniRule"/>
</dbReference>
<dbReference type="HAMAP" id="MF_01062">
    <property type="entry name" value="PSRP"/>
    <property type="match status" value="1"/>
</dbReference>
<dbReference type="InterPro" id="IPR005177">
    <property type="entry name" value="Kinase-pyrophosphorylase"/>
</dbReference>
<dbReference type="InterPro" id="IPR026530">
    <property type="entry name" value="PSRP"/>
</dbReference>
<dbReference type="NCBIfam" id="NF003742">
    <property type="entry name" value="PRK05339.1"/>
    <property type="match status" value="1"/>
</dbReference>
<dbReference type="PANTHER" id="PTHR31756">
    <property type="entry name" value="PYRUVATE, PHOSPHATE DIKINASE REGULATORY PROTEIN 1, CHLOROPLASTIC"/>
    <property type="match status" value="1"/>
</dbReference>
<dbReference type="PANTHER" id="PTHR31756:SF3">
    <property type="entry name" value="PYRUVATE, PHOSPHATE DIKINASE REGULATORY PROTEIN 1, CHLOROPLASTIC"/>
    <property type="match status" value="1"/>
</dbReference>
<dbReference type="Pfam" id="PF03618">
    <property type="entry name" value="Kinase-PPPase"/>
    <property type="match status" value="1"/>
</dbReference>
<organism>
    <name type="scientific">Escherichia coli (strain 55989 / EAEC)</name>
    <dbReference type="NCBI Taxonomy" id="585055"/>
    <lineage>
        <taxon>Bacteria</taxon>
        <taxon>Pseudomonadati</taxon>
        <taxon>Pseudomonadota</taxon>
        <taxon>Gammaproteobacteria</taxon>
        <taxon>Enterobacterales</taxon>
        <taxon>Enterobacteriaceae</taxon>
        <taxon>Escherichia</taxon>
    </lineage>
</organism>
<proteinExistence type="inferred from homology"/>
<gene>
    <name evidence="1" type="primary">ppsR</name>
    <name type="ordered locus">EC55989_1871</name>
</gene>
<reference key="1">
    <citation type="journal article" date="2009" name="PLoS Genet.">
        <title>Organised genome dynamics in the Escherichia coli species results in highly diverse adaptive paths.</title>
        <authorList>
            <person name="Touchon M."/>
            <person name="Hoede C."/>
            <person name="Tenaillon O."/>
            <person name="Barbe V."/>
            <person name="Baeriswyl S."/>
            <person name="Bidet P."/>
            <person name="Bingen E."/>
            <person name="Bonacorsi S."/>
            <person name="Bouchier C."/>
            <person name="Bouvet O."/>
            <person name="Calteau A."/>
            <person name="Chiapello H."/>
            <person name="Clermont O."/>
            <person name="Cruveiller S."/>
            <person name="Danchin A."/>
            <person name="Diard M."/>
            <person name="Dossat C."/>
            <person name="Karoui M.E."/>
            <person name="Frapy E."/>
            <person name="Garry L."/>
            <person name="Ghigo J.M."/>
            <person name="Gilles A.M."/>
            <person name="Johnson J."/>
            <person name="Le Bouguenec C."/>
            <person name="Lescat M."/>
            <person name="Mangenot S."/>
            <person name="Martinez-Jehanne V."/>
            <person name="Matic I."/>
            <person name="Nassif X."/>
            <person name="Oztas S."/>
            <person name="Petit M.A."/>
            <person name="Pichon C."/>
            <person name="Rouy Z."/>
            <person name="Ruf C.S."/>
            <person name="Schneider D."/>
            <person name="Tourret J."/>
            <person name="Vacherie B."/>
            <person name="Vallenet D."/>
            <person name="Medigue C."/>
            <person name="Rocha E.P.C."/>
            <person name="Denamur E."/>
        </authorList>
    </citation>
    <scope>NUCLEOTIDE SEQUENCE [LARGE SCALE GENOMIC DNA]</scope>
    <source>
        <strain>55989 / EAEC</strain>
    </source>
</reference>
<accession>B7L6H6</accession>
<sequence>MDNAVDRHVFYISDGTAITAEVLGHAVMSQFPVTISSITLPFVENESRARAVKDQIDAIYHQTGVRPLVFYSIVLPEIRAIILQSEGFCQDIVQALVAPLQQEMKLDPTPIAHRTHGLNPNNLNKYDARIAAIDYTLAHDDGISLRNLDQAQVILLGVSRCGKTPTSLYLAMQFGIRAANYPFIADDMDNLVLPASLKPLQHKLFGLTIDPERLAAIREERRENSRYASLRQCRMEVAEVEALYRKNQIPWINSTNYSVEEIATKILDIMGLSRRMY</sequence>